<reference key="1">
    <citation type="journal article" date="1999" name="Nature">
        <title>Sequence and analysis of chromosome 2 of the plant Arabidopsis thaliana.</title>
        <authorList>
            <person name="Lin X."/>
            <person name="Kaul S."/>
            <person name="Rounsley S.D."/>
            <person name="Shea T.P."/>
            <person name="Benito M.-I."/>
            <person name="Town C.D."/>
            <person name="Fujii C.Y."/>
            <person name="Mason T.M."/>
            <person name="Bowman C.L."/>
            <person name="Barnstead M.E."/>
            <person name="Feldblyum T.V."/>
            <person name="Buell C.R."/>
            <person name="Ketchum K.A."/>
            <person name="Lee J.J."/>
            <person name="Ronning C.M."/>
            <person name="Koo H.L."/>
            <person name="Moffat K.S."/>
            <person name="Cronin L.A."/>
            <person name="Shen M."/>
            <person name="Pai G."/>
            <person name="Van Aken S."/>
            <person name="Umayam L."/>
            <person name="Tallon L.J."/>
            <person name="Gill J.E."/>
            <person name="Adams M.D."/>
            <person name="Carrera A.J."/>
            <person name="Creasy T.H."/>
            <person name="Goodman H.M."/>
            <person name="Somerville C.R."/>
            <person name="Copenhaver G.P."/>
            <person name="Preuss D."/>
            <person name="Nierman W.C."/>
            <person name="White O."/>
            <person name="Eisen J.A."/>
            <person name="Salzberg S.L."/>
            <person name="Fraser C.M."/>
            <person name="Venter J.C."/>
        </authorList>
    </citation>
    <scope>NUCLEOTIDE SEQUENCE [LARGE SCALE GENOMIC DNA]</scope>
    <source>
        <strain>cv. Columbia</strain>
    </source>
</reference>
<reference key="2">
    <citation type="journal article" date="2017" name="Plant J.">
        <title>Araport11: a complete reannotation of the Arabidopsis thaliana reference genome.</title>
        <authorList>
            <person name="Cheng C.Y."/>
            <person name="Krishnakumar V."/>
            <person name="Chan A.P."/>
            <person name="Thibaud-Nissen F."/>
            <person name="Schobel S."/>
            <person name="Town C.D."/>
        </authorList>
    </citation>
    <scope>GENOME REANNOTATION</scope>
    <source>
        <strain>cv. Columbia</strain>
    </source>
</reference>
<reference key="3">
    <citation type="journal article" date="2003" name="Science">
        <title>Empirical analysis of transcriptional activity in the Arabidopsis genome.</title>
        <authorList>
            <person name="Yamada K."/>
            <person name="Lim J."/>
            <person name="Dale J.M."/>
            <person name="Chen H."/>
            <person name="Shinn P."/>
            <person name="Palm C.J."/>
            <person name="Southwick A.M."/>
            <person name="Wu H.C."/>
            <person name="Kim C.J."/>
            <person name="Nguyen M."/>
            <person name="Pham P.K."/>
            <person name="Cheuk R.F."/>
            <person name="Karlin-Newmann G."/>
            <person name="Liu S.X."/>
            <person name="Lam B."/>
            <person name="Sakano H."/>
            <person name="Wu T."/>
            <person name="Yu G."/>
            <person name="Miranda M."/>
            <person name="Quach H.L."/>
            <person name="Tripp M."/>
            <person name="Chang C.H."/>
            <person name="Lee J.M."/>
            <person name="Toriumi M.J."/>
            <person name="Chan M.M."/>
            <person name="Tang C.C."/>
            <person name="Onodera C.S."/>
            <person name="Deng J.M."/>
            <person name="Akiyama K."/>
            <person name="Ansari Y."/>
            <person name="Arakawa T."/>
            <person name="Banh J."/>
            <person name="Banno F."/>
            <person name="Bowser L."/>
            <person name="Brooks S.Y."/>
            <person name="Carninci P."/>
            <person name="Chao Q."/>
            <person name="Choy N."/>
            <person name="Enju A."/>
            <person name="Goldsmith A.D."/>
            <person name="Gurjal M."/>
            <person name="Hansen N.F."/>
            <person name="Hayashizaki Y."/>
            <person name="Johnson-Hopson C."/>
            <person name="Hsuan V.W."/>
            <person name="Iida K."/>
            <person name="Karnes M."/>
            <person name="Khan S."/>
            <person name="Koesema E."/>
            <person name="Ishida J."/>
            <person name="Jiang P.X."/>
            <person name="Jones T."/>
            <person name="Kawai J."/>
            <person name="Kamiya A."/>
            <person name="Meyers C."/>
            <person name="Nakajima M."/>
            <person name="Narusaka M."/>
            <person name="Seki M."/>
            <person name="Sakurai T."/>
            <person name="Satou M."/>
            <person name="Tamse R."/>
            <person name="Vaysberg M."/>
            <person name="Wallender E.K."/>
            <person name="Wong C."/>
            <person name="Yamamura Y."/>
            <person name="Yuan S."/>
            <person name="Shinozaki K."/>
            <person name="Davis R.W."/>
            <person name="Theologis A."/>
            <person name="Ecker J.R."/>
        </authorList>
    </citation>
    <scope>NUCLEOTIDE SEQUENCE [LARGE SCALE MRNA] (ISOFORM 1)</scope>
    <source>
        <strain>cv. Columbia</strain>
    </source>
</reference>
<reference key="4">
    <citation type="submission" date="2006-07" db="EMBL/GenBank/DDBJ databases">
        <title>Large-scale analysis of RIKEN Arabidopsis full-length (RAFL) cDNAs.</title>
        <authorList>
            <person name="Totoki Y."/>
            <person name="Seki M."/>
            <person name="Ishida J."/>
            <person name="Nakajima M."/>
            <person name="Enju A."/>
            <person name="Kamiya A."/>
            <person name="Narusaka M."/>
            <person name="Shin-i T."/>
            <person name="Nakagawa M."/>
            <person name="Sakamoto N."/>
            <person name="Oishi K."/>
            <person name="Kohara Y."/>
            <person name="Kobayashi M."/>
            <person name="Toyoda A."/>
            <person name="Sakaki Y."/>
            <person name="Sakurai T."/>
            <person name="Iida K."/>
            <person name="Akiyama K."/>
            <person name="Satou M."/>
            <person name="Toyoda T."/>
            <person name="Konagaya A."/>
            <person name="Carninci P."/>
            <person name="Kawai J."/>
            <person name="Hayashizaki Y."/>
            <person name="Shinozaki K."/>
        </authorList>
    </citation>
    <scope>NUCLEOTIDE SEQUENCE [LARGE SCALE MRNA] OF 1-313 AND 417-777 (ISOFORM 2)</scope>
    <source>
        <strain>cv. Columbia</strain>
    </source>
</reference>
<reference key="5">
    <citation type="journal article" date="2001" name="Cell Stress Chaperones">
        <title>The Hsp90 family of proteins in Arabidopsis thaliana.</title>
        <authorList>
            <person name="Krishna P."/>
            <person name="Gloor G."/>
        </authorList>
    </citation>
    <scope>GENE FAMILY</scope>
    <scope>NOMENCLATURE</scope>
</reference>
<reference key="6">
    <citation type="journal article" date="2003" name="Plant J.">
        <title>The chlorate-resistant and photomorphogenesis-defective mutant cr88 encodes a chloroplast-targeted HSP90.</title>
        <authorList>
            <person name="Cao D."/>
            <person name="Froehlich J.E."/>
            <person name="Zhang H."/>
            <person name="Cheng C.L."/>
        </authorList>
    </citation>
    <scope>SUBCELLULAR LOCATION</scope>
    <scope>TISSUE SPECIFICITY</scope>
    <scope>INDUCTION</scope>
    <scope>MUTAGENESIS OF GLY-646</scope>
    <scope>FUNCTION</scope>
</reference>
<reference key="7">
    <citation type="journal article" date="2007" name="Mol. Cell. Proteomics">
        <title>Multidimensional protein identification technology (MudPIT) analysis of ubiquitinated proteins in plants.</title>
        <authorList>
            <person name="Maor R."/>
            <person name="Jones A."/>
            <person name="Nuehse T.S."/>
            <person name="Studholme D.J."/>
            <person name="Peck S.C."/>
            <person name="Shirasu K."/>
        </authorList>
    </citation>
    <scope>IDENTIFICATION BY MASS SPECTROMETRY [LARGE SCALE ANALYSIS]</scope>
    <source>
        <strain>cv. Landsberg erecta</strain>
    </source>
</reference>
<reference key="8">
    <citation type="journal article" date="2009" name="J. Proteomics">
        <title>Phosphoproteomic analysis of nuclei-enriched fractions from Arabidopsis thaliana.</title>
        <authorList>
            <person name="Jones A.M.E."/>
            <person name="MacLean D."/>
            <person name="Studholme D.J."/>
            <person name="Serna-Sanz A."/>
            <person name="Andreasson E."/>
            <person name="Rathjen J.P."/>
            <person name="Peck S.C."/>
        </authorList>
    </citation>
    <scope>IDENTIFICATION BY MASS SPECTROMETRY [LARGE SCALE ANALYSIS]</scope>
    <source>
        <strain>cv. Columbia</strain>
    </source>
</reference>
<reference key="9">
    <citation type="journal article" date="2010" name="J. Plant Physiol.">
        <title>Expression of five AtHsp90 genes in Saccharomyces cerevisiae reveals functional differences of AtHsp90s under abiotic stresses.</title>
        <authorList>
            <person name="Song H."/>
            <person name="Fan P."/>
            <person name="Shi W."/>
            <person name="Zhao R."/>
            <person name="Li Y."/>
        </authorList>
    </citation>
    <scope>INTERACTION WITH P23-1</scope>
</reference>
<reference key="10">
    <citation type="journal article" date="2013" name="Proc. Natl. Acad. Sci. U.S.A.">
        <title>An essential role for chloroplast heat shock protein 90 (Hsp90C) in protein import into chloroplasts.</title>
        <authorList>
            <person name="Inoue H."/>
            <person name="Li M."/>
            <person name="Schnell D.J."/>
        </authorList>
    </citation>
    <scope>IDENTIFICATION BY MASS SPECTROMETRY</scope>
    <scope>FUNCTION</scope>
    <scope>SUBCELLULAR LOCATION</scope>
    <scope>DISRUPTION PHENOTYPE</scope>
</reference>
<reference key="11">
    <citation type="journal article" date="2014" name="BMC Res. Notes">
        <title>Cosuppression of the chloroplast localized molecular chaperone HSP90.5 impairs plant development and chloroplast biogenesis in Arabidopsis.</title>
        <authorList>
            <person name="Oh S.E."/>
            <person name="Yeung C."/>
            <person name="Babaei-Rad R."/>
            <person name="Zhao R."/>
        </authorList>
    </citation>
    <scope>FUNCTION</scope>
    <scope>HOMODIMERIZATION</scope>
</reference>
<reference key="12">
    <citation type="journal article" date="2014" name="Physiol. Plantarum">
        <title>Chloroplast-targeted Hsp90 plays essential roles in plastid development and embryogenesis in Arabidopsis possibly linking with VIPP1.</title>
        <authorList>
            <person name="Feng J."/>
            <person name="Fan P."/>
            <person name="Jiang P."/>
            <person name="Lv S."/>
            <person name="Chen X."/>
            <person name="Li Y."/>
        </authorList>
    </citation>
    <scope>FUNCTION</scope>
    <scope>INTERACTION WITH VIPP1</scope>
    <scope>DEVELOPMENTAL STAGE</scope>
    <scope>DISRUPTION PHENOTYPE</scope>
</reference>
<feature type="transit peptide" description="Chloroplast" evidence="2">
    <location>
        <begin position="1"/>
        <end position="60"/>
    </location>
</feature>
<feature type="chain" id="PRO_0000434018" description="Heat shock protein 90-5, chloroplastic" evidence="2">
    <location>
        <begin position="61"/>
        <end position="780"/>
    </location>
</feature>
<feature type="region of interest" description="Disordered" evidence="3">
    <location>
        <begin position="742"/>
        <end position="780"/>
    </location>
</feature>
<feature type="compositionally biased region" description="Basic and acidic residues" evidence="3">
    <location>
        <begin position="769"/>
        <end position="780"/>
    </location>
</feature>
<feature type="binding site" evidence="1">
    <location>
        <position position="106"/>
    </location>
    <ligand>
        <name>ATP</name>
        <dbReference type="ChEBI" id="CHEBI:30616"/>
    </ligand>
</feature>
<feature type="binding site" evidence="1">
    <location>
        <position position="110"/>
    </location>
    <ligand>
        <name>ATP</name>
        <dbReference type="ChEBI" id="CHEBI:30616"/>
    </ligand>
</feature>
<feature type="binding site" evidence="1">
    <location>
        <position position="152"/>
    </location>
    <ligand>
        <name>ATP</name>
        <dbReference type="ChEBI" id="CHEBI:30616"/>
    </ligand>
</feature>
<feature type="binding site" evidence="1">
    <location>
        <position position="157"/>
    </location>
    <ligand>
        <name>ATP</name>
        <dbReference type="ChEBI" id="CHEBI:30616"/>
    </ligand>
</feature>
<feature type="binding site" evidence="1">
    <location>
        <begin position="172"/>
        <end position="173"/>
    </location>
    <ligand>
        <name>ATP</name>
        <dbReference type="ChEBI" id="CHEBI:30616"/>
    </ligand>
</feature>
<feature type="binding site" evidence="1">
    <location>
        <begin position="196"/>
        <end position="201"/>
    </location>
    <ligand>
        <name>ATP</name>
        <dbReference type="ChEBI" id="CHEBI:30616"/>
    </ligand>
</feature>
<feature type="binding site" evidence="1">
    <location>
        <position position="251"/>
    </location>
    <ligand>
        <name>ATP</name>
        <dbReference type="ChEBI" id="CHEBI:30616"/>
    </ligand>
</feature>
<feature type="binding site" evidence="1">
    <location>
        <position position="441"/>
    </location>
    <ligand>
        <name>ATP</name>
        <dbReference type="ChEBI" id="CHEBI:30616"/>
    </ligand>
</feature>
<feature type="splice variant" id="VSP_057880" description="In isoform 2.">
    <location>
        <begin position="476"/>
        <end position="478"/>
    </location>
</feature>
<feature type="mutagenesis site" description="In cr88; delay in greening of young rosette leaves. Reduced nitrate reductase activity in response to nitrate." evidence="4">
    <original>G</original>
    <variation>R</variation>
    <location>
        <position position="646"/>
    </location>
</feature>
<feature type="sequence conflict" description="In Ref. 3; AAM19795." evidence="12" ref="3">
    <original>Y</original>
    <variation>N</variation>
    <location>
        <position position="224"/>
    </location>
</feature>
<gene>
    <name evidence="9" type="primary">HSP90-5</name>
    <name evidence="10" type="synonym">CR88</name>
    <name evidence="11" type="synonym">EMB1956</name>
    <name evidence="9" type="synonym">HSP88-1</name>
    <name evidence="13" type="ordered locus">At2g04030</name>
</gene>
<evidence type="ECO:0000250" key="1">
    <source>
        <dbReference type="UniProtKB" id="P02829"/>
    </source>
</evidence>
<evidence type="ECO:0000255" key="2"/>
<evidence type="ECO:0000256" key="3">
    <source>
        <dbReference type="SAM" id="MobiDB-lite"/>
    </source>
</evidence>
<evidence type="ECO:0000269" key="4">
    <source>
    </source>
</evidence>
<evidence type="ECO:0000269" key="5">
    <source>
    </source>
</evidence>
<evidence type="ECO:0000269" key="6">
    <source>
    </source>
</evidence>
<evidence type="ECO:0000269" key="7">
    <source>
    </source>
</evidence>
<evidence type="ECO:0000269" key="8">
    <source>
    </source>
</evidence>
<evidence type="ECO:0000303" key="9">
    <source>
    </source>
</evidence>
<evidence type="ECO:0000303" key="10">
    <source>
    </source>
</evidence>
<evidence type="ECO:0000303" key="11">
    <source>
    </source>
</evidence>
<evidence type="ECO:0000305" key="12"/>
<evidence type="ECO:0000312" key="13">
    <source>
        <dbReference type="Araport" id="AT2G04030"/>
    </source>
</evidence>
<comment type="function">
    <text evidence="4 6 7 8">Molecular chaperone required for chloroplast biogenesis (PubMed:12943545, PubMed:25216779). Essential for chloroplast biogenesis and maintenance, and thus for embryogenesis (PubMed:23382192, PubMed:23875936). May be involved in the disassembly of VIPP1 for thylakoid membrane formation and/or maintenance (PubMed:23875936). Cooperates with TIC components and other molecular chaperones to drive transport of preproteins into chloroplasts and functions in the chloroplast stroma to facilitate membrane translocation during protein import into the organelle (PubMed:23382192).</text>
</comment>
<comment type="subunit">
    <text evidence="5 7 8">Homodimer (PubMed:25216779). Interacts with VIPP1 (PubMed:23875936). Interacts with P23-1 (PubMed:20493581).</text>
</comment>
<comment type="subcellular location">
    <subcellularLocation>
        <location evidence="4 6">Plastid</location>
        <location evidence="4 6">Chloroplast stroma</location>
    </subcellularLocation>
</comment>
<comment type="alternative products">
    <event type="alternative splicing"/>
    <isoform>
        <id>Q9SIF2-1</id>
        <name>1</name>
        <sequence type="displayed"/>
    </isoform>
    <isoform>
        <id>Q9SIF2-2</id>
        <name>2</name>
        <sequence type="described" ref="VSP_057880"/>
    </isoform>
</comment>
<comment type="tissue specificity">
    <text evidence="4">Expressed in roots, cotyledons, young leaves, mature leaves, stems, flowers, petals and siliques.</text>
</comment>
<comment type="developmental stage">
    <text evidence="7">During embryogenesis, highly expressed at 4 days post anthesis.</text>
</comment>
<comment type="induction">
    <text evidence="4">By heat shock and light.</text>
</comment>
<comment type="disruption phenotype">
    <text evidence="6 7">Embryonic lethality due to embryo development arrest at the heart stage.</text>
</comment>
<comment type="miscellaneous">
    <text evidence="7">Plants over-expressing HSP90.7 show albino and stunted leaves.</text>
</comment>
<comment type="similarity">
    <text evidence="12">Belongs to the heat shock protein 90 family.</text>
</comment>
<dbReference type="EMBL" id="AC007167">
    <property type="protein sequence ID" value="AAD32922.1"/>
    <property type="molecule type" value="Genomic_DNA"/>
</dbReference>
<dbReference type="EMBL" id="CP002685">
    <property type="protein sequence ID" value="AEC05778.1"/>
    <property type="molecule type" value="Genomic_DNA"/>
</dbReference>
<dbReference type="EMBL" id="CP002685">
    <property type="protein sequence ID" value="AEC05779.1"/>
    <property type="molecule type" value="Genomic_DNA"/>
</dbReference>
<dbReference type="EMBL" id="AF436826">
    <property type="protein sequence ID" value="AAL32008.1"/>
    <property type="molecule type" value="mRNA"/>
</dbReference>
<dbReference type="EMBL" id="AY053403">
    <property type="protein sequence ID" value="AAK96633.1"/>
    <property type="molecule type" value="mRNA"/>
</dbReference>
<dbReference type="EMBL" id="AY094422">
    <property type="protein sequence ID" value="AAM19795.1"/>
    <property type="molecule type" value="mRNA"/>
</dbReference>
<dbReference type="EMBL" id="BT002234">
    <property type="protein sequence ID" value="AAN72245.1"/>
    <property type="molecule type" value="mRNA"/>
</dbReference>
<dbReference type="EMBL" id="AK229707">
    <property type="protein sequence ID" value="BAF01546.1"/>
    <property type="molecule type" value="mRNA"/>
</dbReference>
<dbReference type="EMBL" id="AK229761">
    <property type="protein sequence ID" value="BAF01597.1"/>
    <property type="molecule type" value="mRNA"/>
</dbReference>
<dbReference type="PIR" id="H84453">
    <property type="entry name" value="H84453"/>
</dbReference>
<dbReference type="RefSeq" id="NP_178487.1">
    <molecule id="Q9SIF2-1"/>
    <property type="nucleotide sequence ID" value="NM_126439.4"/>
</dbReference>
<dbReference type="RefSeq" id="NP_849932.1">
    <molecule id="Q9SIF2-2"/>
    <property type="nucleotide sequence ID" value="NM_179601.1"/>
</dbReference>
<dbReference type="SMR" id="Q9SIF2"/>
<dbReference type="FunCoup" id="Q9SIF2">
    <property type="interactions" value="668"/>
</dbReference>
<dbReference type="IntAct" id="Q9SIF2">
    <property type="interactions" value="2"/>
</dbReference>
<dbReference type="STRING" id="3702.Q9SIF2"/>
<dbReference type="GlyGen" id="Q9SIF2">
    <property type="glycosylation" value="1 site"/>
</dbReference>
<dbReference type="iPTMnet" id="Q9SIF2"/>
<dbReference type="SwissPalm" id="Q9SIF2"/>
<dbReference type="PaxDb" id="3702-AT2G04030.1"/>
<dbReference type="ProMEX" id="Q9SIF2"/>
<dbReference type="ProteomicsDB" id="230250">
    <molecule id="Q9SIF2-1"/>
</dbReference>
<dbReference type="EnsemblPlants" id="AT2G04030.1">
    <molecule id="Q9SIF2-1"/>
    <property type="protein sequence ID" value="AT2G04030.1"/>
    <property type="gene ID" value="AT2G04030"/>
</dbReference>
<dbReference type="EnsemblPlants" id="AT2G04030.2">
    <molecule id="Q9SIF2-2"/>
    <property type="protein sequence ID" value="AT2G04030.2"/>
    <property type="gene ID" value="AT2G04030"/>
</dbReference>
<dbReference type="GeneID" id="814930"/>
<dbReference type="Gramene" id="AT2G04030.1">
    <molecule id="Q9SIF2-1"/>
    <property type="protein sequence ID" value="AT2G04030.1"/>
    <property type="gene ID" value="AT2G04030"/>
</dbReference>
<dbReference type="Gramene" id="AT2G04030.2">
    <molecule id="Q9SIF2-2"/>
    <property type="protein sequence ID" value="AT2G04030.2"/>
    <property type="gene ID" value="AT2G04030"/>
</dbReference>
<dbReference type="KEGG" id="ath:AT2G04030"/>
<dbReference type="Araport" id="AT2G04030"/>
<dbReference type="TAIR" id="AT2G04030">
    <property type="gene designation" value="CR88"/>
</dbReference>
<dbReference type="eggNOG" id="KOG0019">
    <property type="taxonomic scope" value="Eukaryota"/>
</dbReference>
<dbReference type="InParanoid" id="Q9SIF2"/>
<dbReference type="OMA" id="QFGKHIR"/>
<dbReference type="OrthoDB" id="28737at2759"/>
<dbReference type="PhylomeDB" id="Q9SIF2"/>
<dbReference type="CD-CODE" id="4299E36E">
    <property type="entry name" value="Nucleolus"/>
</dbReference>
<dbReference type="PRO" id="PR:Q9SIF2"/>
<dbReference type="Proteomes" id="UP000006548">
    <property type="component" value="Chromosome 2"/>
</dbReference>
<dbReference type="ExpressionAtlas" id="Q9SIF2">
    <property type="expression patterns" value="baseline and differential"/>
</dbReference>
<dbReference type="GO" id="GO:0009507">
    <property type="term" value="C:chloroplast"/>
    <property type="evidence" value="ECO:0007005"/>
    <property type="project" value="TAIR"/>
</dbReference>
<dbReference type="GO" id="GO:0009941">
    <property type="term" value="C:chloroplast envelope"/>
    <property type="evidence" value="ECO:0007005"/>
    <property type="project" value="TAIR"/>
</dbReference>
<dbReference type="GO" id="GO:0009570">
    <property type="term" value="C:chloroplast stroma"/>
    <property type="evidence" value="ECO:0000314"/>
    <property type="project" value="TAIR"/>
</dbReference>
<dbReference type="GO" id="GO:0005739">
    <property type="term" value="C:mitochondrion"/>
    <property type="evidence" value="ECO:0007005"/>
    <property type="project" value="TAIR"/>
</dbReference>
<dbReference type="GO" id="GO:0000325">
    <property type="term" value="C:plant-type vacuole"/>
    <property type="evidence" value="ECO:0007005"/>
    <property type="project" value="TAIR"/>
</dbReference>
<dbReference type="GO" id="GO:0009536">
    <property type="term" value="C:plastid"/>
    <property type="evidence" value="ECO:0007005"/>
    <property type="project" value="TAIR"/>
</dbReference>
<dbReference type="GO" id="GO:0005524">
    <property type="term" value="F:ATP binding"/>
    <property type="evidence" value="ECO:0007005"/>
    <property type="project" value="TAIR"/>
</dbReference>
<dbReference type="GO" id="GO:0016887">
    <property type="term" value="F:ATP hydrolysis activity"/>
    <property type="evidence" value="ECO:0007669"/>
    <property type="project" value="InterPro"/>
</dbReference>
<dbReference type="GO" id="GO:0140662">
    <property type="term" value="F:ATP-dependent protein folding chaperone"/>
    <property type="evidence" value="ECO:0007669"/>
    <property type="project" value="InterPro"/>
</dbReference>
<dbReference type="GO" id="GO:0042803">
    <property type="term" value="F:protein homodimerization activity"/>
    <property type="evidence" value="ECO:0000314"/>
    <property type="project" value="UniProtKB"/>
</dbReference>
<dbReference type="GO" id="GO:0051082">
    <property type="term" value="F:unfolded protein binding"/>
    <property type="evidence" value="ECO:0007669"/>
    <property type="project" value="InterPro"/>
</dbReference>
<dbReference type="GO" id="GO:0009704">
    <property type="term" value="P:de-etiolation"/>
    <property type="evidence" value="ECO:0000315"/>
    <property type="project" value="TAIR"/>
</dbReference>
<dbReference type="GO" id="GO:0045037">
    <property type="term" value="P:protein import into chloroplast stroma"/>
    <property type="evidence" value="ECO:0000315"/>
    <property type="project" value="TAIR"/>
</dbReference>
<dbReference type="GO" id="GO:0010157">
    <property type="term" value="P:response to chlorate"/>
    <property type="evidence" value="ECO:0000315"/>
    <property type="project" value="TAIR"/>
</dbReference>
<dbReference type="GO" id="GO:0009408">
    <property type="term" value="P:response to heat"/>
    <property type="evidence" value="ECO:0000270"/>
    <property type="project" value="TAIR"/>
</dbReference>
<dbReference type="GO" id="GO:0009651">
    <property type="term" value="P:response to salt stress"/>
    <property type="evidence" value="ECO:0000315"/>
    <property type="project" value="TAIR"/>
</dbReference>
<dbReference type="GO" id="GO:0009414">
    <property type="term" value="P:response to water deprivation"/>
    <property type="evidence" value="ECO:0000315"/>
    <property type="project" value="TAIR"/>
</dbReference>
<dbReference type="CDD" id="cd16927">
    <property type="entry name" value="HATPase_Hsp90-like"/>
    <property type="match status" value="1"/>
</dbReference>
<dbReference type="FunFam" id="3.40.50.11260:FF:000005">
    <property type="entry name" value="Heat shock protein 90"/>
    <property type="match status" value="1"/>
</dbReference>
<dbReference type="FunFam" id="1.20.120.790:FF:000001">
    <property type="entry name" value="Heat shock protein 90 alpha"/>
    <property type="match status" value="1"/>
</dbReference>
<dbReference type="FunFam" id="3.30.230.80:FF:000005">
    <property type="entry name" value="heat shock protein 90-5, chloroplastic"/>
    <property type="match status" value="1"/>
</dbReference>
<dbReference type="FunFam" id="3.30.565.10:FF:000024">
    <property type="entry name" value="heat shock protein 90-5, chloroplastic"/>
    <property type="match status" value="1"/>
</dbReference>
<dbReference type="Gene3D" id="3.30.230.80">
    <property type="match status" value="1"/>
</dbReference>
<dbReference type="Gene3D" id="3.40.50.11260">
    <property type="match status" value="1"/>
</dbReference>
<dbReference type="Gene3D" id="1.20.120.790">
    <property type="entry name" value="Heat shock protein 90, C-terminal domain"/>
    <property type="match status" value="1"/>
</dbReference>
<dbReference type="Gene3D" id="3.30.565.10">
    <property type="entry name" value="Histidine kinase-like ATPase, C-terminal domain"/>
    <property type="match status" value="1"/>
</dbReference>
<dbReference type="HAMAP" id="MF_00505">
    <property type="entry name" value="HSP90"/>
    <property type="match status" value="1"/>
</dbReference>
<dbReference type="InterPro" id="IPR036890">
    <property type="entry name" value="HATPase_C_sf"/>
</dbReference>
<dbReference type="InterPro" id="IPR019805">
    <property type="entry name" value="Heat_shock_protein_90_CS"/>
</dbReference>
<dbReference type="InterPro" id="IPR037196">
    <property type="entry name" value="HSP90_C"/>
</dbReference>
<dbReference type="InterPro" id="IPR001404">
    <property type="entry name" value="Hsp90_fam"/>
</dbReference>
<dbReference type="InterPro" id="IPR020575">
    <property type="entry name" value="Hsp90_N"/>
</dbReference>
<dbReference type="InterPro" id="IPR020568">
    <property type="entry name" value="Ribosomal_Su5_D2-typ_SF"/>
</dbReference>
<dbReference type="NCBIfam" id="NF003555">
    <property type="entry name" value="PRK05218.1"/>
    <property type="match status" value="1"/>
</dbReference>
<dbReference type="PANTHER" id="PTHR11528">
    <property type="entry name" value="HEAT SHOCK PROTEIN 90 FAMILY MEMBER"/>
    <property type="match status" value="1"/>
</dbReference>
<dbReference type="Pfam" id="PF13589">
    <property type="entry name" value="HATPase_c_3"/>
    <property type="match status" value="1"/>
</dbReference>
<dbReference type="Pfam" id="PF00183">
    <property type="entry name" value="HSP90"/>
    <property type="match status" value="1"/>
</dbReference>
<dbReference type="PIRSF" id="PIRSF002583">
    <property type="entry name" value="Hsp90"/>
    <property type="match status" value="1"/>
</dbReference>
<dbReference type="PRINTS" id="PR00775">
    <property type="entry name" value="HEATSHOCK90"/>
</dbReference>
<dbReference type="SMART" id="SM00387">
    <property type="entry name" value="HATPase_c"/>
    <property type="match status" value="1"/>
</dbReference>
<dbReference type="SUPFAM" id="SSF55874">
    <property type="entry name" value="ATPase domain of HSP90 chaperone/DNA topoisomerase II/histidine kinase"/>
    <property type="match status" value="1"/>
</dbReference>
<dbReference type="SUPFAM" id="SSF110942">
    <property type="entry name" value="HSP90 C-terminal domain"/>
    <property type="match status" value="1"/>
</dbReference>
<dbReference type="SUPFAM" id="SSF54211">
    <property type="entry name" value="Ribosomal protein S5 domain 2-like"/>
    <property type="match status" value="1"/>
</dbReference>
<dbReference type="PROSITE" id="PS00298">
    <property type="entry name" value="HSP90"/>
    <property type="match status" value="1"/>
</dbReference>
<name>HS905_ARATH</name>
<accession>Q9SIF2</accession>
<accession>F4IU89</accession>
<accession>Q0WMQ3</accession>
<accession>Q0WMV4</accession>
<accession>Q8LPS0</accession>
<sequence length="780" mass="88663">MAPALSRSLYTSPLTSVPITPVSSRLSHLRSSFLPHGGALRTGVSCSWNLEKRCNRFAVKCDAAVAEKETTEEGSGEKFEYQAEVSRLLDLIVHSLYSHKEVFLRELVSNASDALDKLRFLSVTEPSLLGDGGDLEIRIKPDPDNGTITITDTGIGMTKEELIDCLGTIAQSGTSKFLKALKENKDLGADNGLIGQFGVGFYSAFLVAEKVVVSTKSPKSDKQYVWESVADSSSYLIREETDPDNILRRGTQITLYLREDDKYEFAESTRIKNLVKNYSQFVGFPIYTWQEKSRTIEVEEDEPVKEGEEGEPKKKKTTKTEKYWDWELANETKPLWMRNSKEVEKGEYNEFYKKAFNEFLDPLAHTHFTTEGEVEFRSILYIPGMGPLNNEDVTNPKTKNIRLYVKRVFISDDFDGELFPRYLSFVKGVVDSDDLPLNVSREILQESRIVRIMRKRLIRKTFDMIQEISESENKEDYKKFWENFGRFLKLGCIEDTGNHKRITPLLRFFSSKNEEELTSLDDYIENMGENQKAIYYLATDSLKSAKSAPFLEKLIQKDIEVLYLVEPIDEVAIQNLQTYKEKKFVDISKEDLELGDEDEVKDREAKQEFNLLCDWIKQQLGDKVAKVQVSNRLSSSPCVLVSGKFGWSANMERLMKAQALGDTSSLEFMRGRRILEINPDHPIIKDLNAACKNAPESTEATRVVDLLYDTAIISSGFTPDSPAELGNKIYEMMAMAVGGRWGRVEEEEESSTVNEGDDKSGETEVVEPSEVRAESDPWQD</sequence>
<protein>
    <recommendedName>
        <fullName evidence="12">Heat shock protein 90-5, chloroplastic</fullName>
        <shortName evidence="12">AtHSP90.5</shortName>
        <shortName evidence="9">AtHsp90-5</shortName>
    </recommendedName>
    <alternativeName>
        <fullName evidence="12">Heat shock protein 88-1</fullName>
        <shortName evidence="9">Hsp88-1</shortName>
    </alternativeName>
    <alternativeName>
        <fullName evidence="11">Hsp90C</fullName>
    </alternativeName>
    <alternativeName>
        <fullName evidence="11">Protein EMBRYO DEFECTIVE 1956</fullName>
    </alternativeName>
    <alternativeName>
        <fullName evidence="10">Protein chlorate-resistance 88</fullName>
    </alternativeName>
</protein>
<proteinExistence type="evidence at protein level"/>
<keyword id="KW-0025">Alternative splicing</keyword>
<keyword id="KW-0067">ATP-binding</keyword>
<keyword id="KW-0143">Chaperone</keyword>
<keyword id="KW-0150">Chloroplast</keyword>
<keyword id="KW-0547">Nucleotide-binding</keyword>
<keyword id="KW-0934">Plastid</keyword>
<keyword id="KW-0653">Protein transport</keyword>
<keyword id="KW-1185">Reference proteome</keyword>
<keyword id="KW-0346">Stress response</keyword>
<keyword id="KW-0809">Transit peptide</keyword>
<keyword id="KW-0813">Transport</keyword>
<organism>
    <name type="scientific">Arabidopsis thaliana</name>
    <name type="common">Mouse-ear cress</name>
    <dbReference type="NCBI Taxonomy" id="3702"/>
    <lineage>
        <taxon>Eukaryota</taxon>
        <taxon>Viridiplantae</taxon>
        <taxon>Streptophyta</taxon>
        <taxon>Embryophyta</taxon>
        <taxon>Tracheophyta</taxon>
        <taxon>Spermatophyta</taxon>
        <taxon>Magnoliopsida</taxon>
        <taxon>eudicotyledons</taxon>
        <taxon>Gunneridae</taxon>
        <taxon>Pentapetalae</taxon>
        <taxon>rosids</taxon>
        <taxon>malvids</taxon>
        <taxon>Brassicales</taxon>
        <taxon>Brassicaceae</taxon>
        <taxon>Camelineae</taxon>
        <taxon>Arabidopsis</taxon>
    </lineage>
</organism>